<proteinExistence type="evidence at protein level"/>
<name>LTOR1_RAT</name>
<sequence length="161" mass="17721">MGCCYSSENEDSDQDQEERKLLLDPSNTPTKALNGAEPSYHSLPSARTDEQALLSSILAKTASNIIDVSAADSQGMEQHEYMDRARQYSTRLAVLSSSLTHWKKLPPLPSLTSQPHQVLASEPIPFSDLQQVSRIAAYAYSALSQIRVDAKEELVVQFGIP</sequence>
<reference key="1">
    <citation type="journal article" date="2004" name="Genome Res.">
        <title>The status, quality, and expansion of the NIH full-length cDNA project: the Mammalian Gene Collection (MGC).</title>
        <authorList>
            <consortium name="The MGC Project Team"/>
        </authorList>
    </citation>
    <scope>NUCLEOTIDE SEQUENCE [LARGE SCALE MRNA]</scope>
    <source>
        <tissue>Prostate</tissue>
    </source>
</reference>
<reference key="2">
    <citation type="journal article" date="2009" name="EMBO J.">
        <title>The novel lipid raft adaptor p18 controls endosome dynamics by anchoring the MEK-ERK pathway to late endosomes.</title>
        <authorList>
            <person name="Nada S."/>
            <person name="Hondo A."/>
            <person name="Kasai A."/>
            <person name="Koike M."/>
            <person name="Saito K."/>
            <person name="Uchiyama Y."/>
            <person name="Okada M."/>
        </authorList>
    </citation>
    <scope>PROTEIN SEQUENCE OF 21-31</scope>
    <scope>SUBCELLULAR LOCATION</scope>
    <scope>MUTAGENESIS OF GLY-2 AND 3-CYS-CYS-4</scope>
    <scope>INTERACTION WITH LAMTOR2 AND LAMTOR3</scope>
    <scope>TISSUE SPECIFICITY</scope>
</reference>
<reference key="3">
    <citation type="journal article" date="2012" name="Nat. Commun.">
        <title>Quantitative maps of protein phosphorylation sites across 14 different rat organs and tissues.</title>
        <authorList>
            <person name="Lundby A."/>
            <person name="Secher A."/>
            <person name="Lage K."/>
            <person name="Nordsborg N.B."/>
            <person name="Dmytriyev A."/>
            <person name="Lundby C."/>
            <person name="Olsen J.V."/>
        </authorList>
    </citation>
    <scope>PHOSPHORYLATION [LARGE SCALE ANALYSIS] AT THR-28</scope>
    <scope>IDENTIFICATION BY MASS SPECTROMETRY [LARGE SCALE ANALYSIS]</scope>
</reference>
<feature type="initiator methionine" description="Removed" evidence="1">
    <location>
        <position position="1"/>
    </location>
</feature>
<feature type="chain" id="PRO_0000274295" description="Ragulator complex protein LAMTOR1">
    <location>
        <begin position="2"/>
        <end position="161"/>
    </location>
</feature>
<feature type="region of interest" description="Disordered" evidence="3">
    <location>
        <begin position="1"/>
        <end position="43"/>
    </location>
</feature>
<feature type="region of interest" description="Interaction with LAMTOR2 and LAMTOR3" evidence="4">
    <location>
        <begin position="121"/>
        <end position="161"/>
    </location>
</feature>
<feature type="modified residue" description="Phosphothreonine" evidence="6">
    <location>
        <position position="28"/>
    </location>
</feature>
<feature type="modified residue" description="Phosphoserine" evidence="1">
    <location>
        <position position="42"/>
    </location>
</feature>
<feature type="modified residue" description="Phosphoserine" evidence="1">
    <location>
        <position position="56"/>
    </location>
</feature>
<feature type="modified residue" description="Phosphoserine" evidence="1">
    <location>
        <position position="98"/>
    </location>
</feature>
<feature type="modified residue" description="Phosphoserine" evidence="1">
    <location>
        <position position="141"/>
    </location>
</feature>
<feature type="lipid moiety-binding region" description="N-myristoyl glycine" evidence="1">
    <location>
        <position position="2"/>
    </location>
</feature>
<feature type="lipid moiety-binding region" description="S-palmitoyl cysteine" evidence="1">
    <location>
        <position position="3"/>
    </location>
</feature>
<feature type="lipid moiety-binding region" description="S-palmitoyl cysteine" evidence="1">
    <location>
        <position position="4"/>
    </location>
</feature>
<feature type="cross-link" description="Glycyl lysine isopeptide (Lys-Gly) (interchain with G-Cter in ubiquitin)" evidence="1">
    <location>
        <position position="20"/>
    </location>
</feature>
<feature type="cross-link" description="Glycyl lysine isopeptide (Lys-Gly) (interchain with G-Cter in ubiquitin)" evidence="1">
    <location>
        <position position="31"/>
    </location>
</feature>
<feature type="cross-link" description="Glycyl lysine isopeptide (Lys-Gly) (interchain with G-Cter in ubiquitin)" evidence="1">
    <location>
        <position position="60"/>
    </location>
</feature>
<feature type="cross-link" description="Glycyl lysine isopeptide (Lys-Gly) (interchain with G-Cter in ubiquitin)" evidence="2">
    <location>
        <position position="103"/>
    </location>
</feature>
<feature type="cross-link" description="Glycyl lysine isopeptide (Lys-Gly) (interchain with G-Cter in ubiquitin)" evidence="2">
    <location>
        <position position="104"/>
    </location>
</feature>
<feature type="mutagenesis site" description="Loss of localization to the late endosomes and redistribution to the cytoplasm." evidence="4">
    <original>G</original>
    <variation>A</variation>
    <location>
        <position position="2"/>
    </location>
</feature>
<feature type="mutagenesis site" description="Loss of localization to the late endosomes and redistribution to the cytoplasm." evidence="4">
    <original>CC</original>
    <variation>AA</variation>
    <location>
        <begin position="3"/>
        <end position="4"/>
    </location>
</feature>
<evidence type="ECO:0000250" key="1">
    <source>
        <dbReference type="UniProtKB" id="Q6IAA8"/>
    </source>
</evidence>
<evidence type="ECO:0000250" key="2">
    <source>
        <dbReference type="UniProtKB" id="Q9CQ22"/>
    </source>
</evidence>
<evidence type="ECO:0000256" key="3">
    <source>
        <dbReference type="SAM" id="MobiDB-lite"/>
    </source>
</evidence>
<evidence type="ECO:0000269" key="4">
    <source>
    </source>
</evidence>
<evidence type="ECO:0000305" key="5"/>
<evidence type="ECO:0007744" key="6">
    <source>
    </source>
</evidence>
<protein>
    <recommendedName>
        <fullName>Ragulator complex protein LAMTOR1</fullName>
    </recommendedName>
    <alternativeName>
        <fullName>Late endosomal/lysosomal adaptor and MAPK and MTOR activator 1</fullName>
    </alternativeName>
    <alternativeName>
        <fullName>Lipid raft adaptor protein p18</fullName>
    </alternativeName>
</protein>
<organism>
    <name type="scientific">Rattus norvegicus</name>
    <name type="common">Rat</name>
    <dbReference type="NCBI Taxonomy" id="10116"/>
    <lineage>
        <taxon>Eukaryota</taxon>
        <taxon>Metazoa</taxon>
        <taxon>Chordata</taxon>
        <taxon>Craniata</taxon>
        <taxon>Vertebrata</taxon>
        <taxon>Euteleostomi</taxon>
        <taxon>Mammalia</taxon>
        <taxon>Eutheria</taxon>
        <taxon>Euarchontoglires</taxon>
        <taxon>Glires</taxon>
        <taxon>Rodentia</taxon>
        <taxon>Myomorpha</taxon>
        <taxon>Muroidea</taxon>
        <taxon>Muridae</taxon>
        <taxon>Murinae</taxon>
        <taxon>Rattus</taxon>
    </lineage>
</organism>
<comment type="function">
    <text evidence="1 2">Key component of the Ragulator complex, a multiprotein complex involved in amino acid sensing and activation of mTORC1, a signaling complex promoting cell growth in response to growth factors, energy levels, and amino acids. Activated by amino acids through a mechanism involving the lysosomal V-ATPase, the Ragulator plays a dual role for the small GTPases Rag (RagA/RRAGA, RagB/RRAGB, RagC/RRAGC and/or RagD/RRAGD): it (1) acts as a guanine nucleotide exchange factor (GEF), activating the small GTPases Rag and (2) mediates recruitment of Rag GTPases to the lysosome membrane. Activated Ragulator and Rag GTPases function as a scaffold recruiting mTORC1 to lysosomes where it is in turn activated. LAMTOR1 is directly responsible for anchoring the Ragulator complex to the lysosomal membrane. LAMTOR1 wraps around the other subunits of the Ragulator complex to hold them in place and interacts with the Rag GTPases, thereby playing a key role in the recruitment of the mTORC1 complex to lysosomes (By similarity). Also involved in the control of embryonic stem cells differentiation via non-canonical RagC/RRAGC and RagD/RRAGD activation: together with FLCN, it is necessary to recruit and activate RagC/RRAGC and RagD/RRAGD at the lysosomes, and to induce exit of embryonic stem cells from pluripotency via non-canonical, mTOR-independent TFE3 inactivation (By similarity). Also required for late endosomes/lysosomes biogenesis it may regulate both the recycling of receptors through endosomes and the MAPK signaling pathway through recruitment of some of its components to late endosomes. May be involved in cholesterol homeostasis regulating LDL uptake and cholesterol release from late endosomes/lysosomes. May also play a role in RHOA activation (By similarity).</text>
</comment>
<comment type="subunit">
    <text evidence="1">Part of the Ragulator complex composed of LAMTOR1, LAMTOR2, LAMTOR3, LAMTOR4 and LAMTOR5. LAMTOR4 and LAMTOR5 form a heterodimer that interacts, through LAMTOR1, with a LAMTOR2, LAMTOR3 heterodimer. Interacts with LAMTOR2 and LAMTOR3; the interaction is direct. The Ragulator complex interacts with both the mTORC1 complex and heterodimers constituted of the Rag GTPases RagA/RRAGA, RagB/RRAGB, RagC/RRAGC and RagD/RRAGD; regulated by amino acid availability. The Ragulator complex interacts with SLC38A9; the probable amino acid sensor. Component of the lysosomal folliculin complex (LFC), composed of FLCN, FNIP1 (or FNIP2), RagA/RRAGA or RagB/RRAGB GDP-bound, RagC/RRAGC or RagD/RRAGD GTP-bound, and Ragulator. Associates with the lysosomal V-ATPase complex; interaction promotes the guanine nucleotide exchange factor (GEF) of the Ragulator complex. Interacts with MMP14. Interacts with CDKN1B; prevents the interaction of CDKN1B with RHOA leaving RHOA in a form accessible to activation by ARHGEF2. Interacts with PIP4P1.</text>
</comment>
<comment type="interaction">
    <interactant intactId="EBI-919067">
        <id>Q6P791</id>
    </interactant>
    <interactant intactId="EBI-1038198">
        <id>Q9JHS3</id>
        <label>Lamtor2</label>
    </interactant>
    <organismsDiffer>true</organismsDiffer>
    <experiments>4</experiments>
</comment>
<comment type="interaction">
    <interactant intactId="EBI-919067">
        <id>Q6P791</id>
    </interactant>
    <interactant intactId="EBI-1039530">
        <id>O88653</id>
        <label>Lamtor3</label>
    </interactant>
    <organismsDiffer>true</organismsDiffer>
    <experiments>5</experiments>
</comment>
<comment type="subcellular location">
    <subcellularLocation>
        <location evidence="1">Lysosome membrane</location>
        <topology evidence="1">Lipid-anchor</topology>
        <orientation evidence="1">Cytoplasmic side</orientation>
    </subcellularLocation>
    <subcellularLocation>
        <location evidence="1">Late endosome membrane</location>
        <topology evidence="1">Lipid-anchor</topology>
        <orientation evidence="1">Cytoplasmic side</orientation>
    </subcellularLocation>
    <text evidence="1">Recruited to lysosome and endosome membranes through N-terminal myristoylation and palmitoylation.</text>
</comment>
<comment type="tissue specificity">
    <text evidence="4">Ubiquitously expressed.</text>
</comment>
<comment type="PTM">
    <text evidence="1">N-terminal myristoylation and palmitoylation mediates its recruitment to lysosome membranes, thereby promoting localization of the Ragulator complex to lysosomes. N-myristoylation by NMT1 is required for palmitoylation at Cys-3 and Cys-4. May be palmitoylated by ZDHHC3.</text>
</comment>
<comment type="PTM">
    <text evidence="1">Ubiquitinated at Lys-60, Lys-103 and Lys-104 by UBE3A, promoting its degradation by the proteasome. Ubiquitination at Lys-20 impairs the association with the lysosomal V-ATPase complex. Deubiquitination at Lys-20 by USP32 promotes the association with the lysosomal V-ATPase complex and subsequent activation of the mTORC1 complex.</text>
</comment>
<comment type="similarity">
    <text evidence="5">Belongs to the LAMTOR1 family.</text>
</comment>
<keyword id="KW-0903">Direct protein sequencing</keyword>
<keyword id="KW-0967">Endosome</keyword>
<keyword id="KW-1017">Isopeptide bond</keyword>
<keyword id="KW-0449">Lipoprotein</keyword>
<keyword id="KW-0458">Lysosome</keyword>
<keyword id="KW-0472">Membrane</keyword>
<keyword id="KW-0519">Myristate</keyword>
<keyword id="KW-0564">Palmitate</keyword>
<keyword id="KW-0597">Phosphoprotein</keyword>
<keyword id="KW-1185">Reference proteome</keyword>
<keyword id="KW-0832">Ubl conjugation</keyword>
<accession>Q6P791</accession>
<gene>
    <name type="primary">Lamtor1</name>
</gene>
<dbReference type="EMBL" id="BC061783">
    <property type="protein sequence ID" value="AAH61783.1"/>
    <property type="molecule type" value="mRNA"/>
</dbReference>
<dbReference type="RefSeq" id="NP_954533.1">
    <property type="nucleotide sequence ID" value="NM_199102.1"/>
</dbReference>
<dbReference type="RefSeq" id="XP_002727613.1">
    <property type="nucleotide sequence ID" value="XM_002727567.4"/>
</dbReference>
<dbReference type="RefSeq" id="XP_002730282.1">
    <property type="nucleotide sequence ID" value="XM_002730236.4"/>
</dbReference>
<dbReference type="SMR" id="Q6P791"/>
<dbReference type="BioGRID" id="259173">
    <property type="interactions" value="1"/>
</dbReference>
<dbReference type="FunCoup" id="Q6P791">
    <property type="interactions" value="2264"/>
</dbReference>
<dbReference type="IntAct" id="Q6P791">
    <property type="interactions" value="5"/>
</dbReference>
<dbReference type="MINT" id="Q6P791"/>
<dbReference type="STRING" id="10116.ENSRNOP00000027150"/>
<dbReference type="iPTMnet" id="Q6P791"/>
<dbReference type="PhosphoSitePlus" id="Q6P791"/>
<dbReference type="SwissPalm" id="Q6P791"/>
<dbReference type="PaxDb" id="10116-ENSRNOP00000027150"/>
<dbReference type="Ensembl" id="ENSRNOT00000005702.3">
    <property type="protein sequence ID" value="ENSRNOP00000089922.1"/>
    <property type="gene ID" value="ENSRNOG00000004319.3"/>
</dbReference>
<dbReference type="GeneID" id="308869"/>
<dbReference type="KEGG" id="rno:308869"/>
<dbReference type="UCSC" id="RGD:735078">
    <property type="organism name" value="rat"/>
</dbReference>
<dbReference type="AGR" id="RGD:2319924"/>
<dbReference type="AGR" id="RGD:735078"/>
<dbReference type="CTD" id="55004"/>
<dbReference type="RGD" id="735078">
    <property type="gene designation" value="Lamtor1"/>
</dbReference>
<dbReference type="VEuPathDB" id="HostDB:ENSRNOG00000020016"/>
<dbReference type="eggNOG" id="ENOG502RYX2">
    <property type="taxonomic scope" value="Eukaryota"/>
</dbReference>
<dbReference type="GeneTree" id="ENSGT00390000016789"/>
<dbReference type="HOGENOM" id="CLU_136283_1_0_1"/>
<dbReference type="InParanoid" id="Q6P791"/>
<dbReference type="OrthoDB" id="5562028at2759"/>
<dbReference type="PhylomeDB" id="Q6P791"/>
<dbReference type="TreeFam" id="TF323788"/>
<dbReference type="Reactome" id="R-RNO-1632852">
    <property type="pathway name" value="Macroautophagy"/>
</dbReference>
<dbReference type="Reactome" id="R-RNO-165159">
    <property type="pathway name" value="MTOR signalling"/>
</dbReference>
<dbReference type="Reactome" id="R-RNO-166208">
    <property type="pathway name" value="mTORC1-mediated signalling"/>
</dbReference>
<dbReference type="Reactome" id="R-RNO-380972">
    <property type="pathway name" value="Energy dependent regulation of mTOR by LKB1-AMPK"/>
</dbReference>
<dbReference type="Reactome" id="R-RNO-5628897">
    <property type="pathway name" value="TP53 Regulates Metabolic Genes"/>
</dbReference>
<dbReference type="Reactome" id="R-RNO-6798695">
    <property type="pathway name" value="Neutrophil degranulation"/>
</dbReference>
<dbReference type="Reactome" id="R-RNO-8943724">
    <property type="pathway name" value="Regulation of PTEN gene transcription"/>
</dbReference>
<dbReference type="Reactome" id="R-RNO-9013149">
    <property type="pathway name" value="RAC1 GTPase cycle"/>
</dbReference>
<dbReference type="Reactome" id="R-RNO-9013404">
    <property type="pathway name" value="RAC2 GTPase cycle"/>
</dbReference>
<dbReference type="Reactome" id="R-RNO-9013406">
    <property type="pathway name" value="RHOQ GTPase cycle"/>
</dbReference>
<dbReference type="Reactome" id="R-RNO-9013407">
    <property type="pathway name" value="RHOH GTPase cycle"/>
</dbReference>
<dbReference type="Reactome" id="R-RNO-9013408">
    <property type="pathway name" value="RHOG GTPase cycle"/>
</dbReference>
<dbReference type="Reactome" id="R-RNO-9639288">
    <property type="pathway name" value="Amino acids regulate mTORC1"/>
</dbReference>
<dbReference type="PRO" id="PR:Q6P791"/>
<dbReference type="Proteomes" id="UP000002494">
    <property type="component" value="Chromosome X"/>
</dbReference>
<dbReference type="Bgee" id="ENSRNOG00000020016">
    <property type="expression patterns" value="Expressed in skeletal muscle tissue and 19 other cell types or tissues"/>
</dbReference>
<dbReference type="GO" id="GO:1990877">
    <property type="term" value="C:FNIP-folliculin RagC/D GAP"/>
    <property type="evidence" value="ECO:0000266"/>
    <property type="project" value="RGD"/>
</dbReference>
<dbReference type="GO" id="GO:0031902">
    <property type="term" value="C:late endosome membrane"/>
    <property type="evidence" value="ECO:0000314"/>
    <property type="project" value="UniProtKB"/>
</dbReference>
<dbReference type="GO" id="GO:0005765">
    <property type="term" value="C:lysosomal membrane"/>
    <property type="evidence" value="ECO:0000250"/>
    <property type="project" value="UniProtKB"/>
</dbReference>
<dbReference type="GO" id="GO:0005764">
    <property type="term" value="C:lysosome"/>
    <property type="evidence" value="ECO:0000250"/>
    <property type="project" value="UniProtKB"/>
</dbReference>
<dbReference type="GO" id="GO:0045121">
    <property type="term" value="C:membrane raft"/>
    <property type="evidence" value="ECO:0000314"/>
    <property type="project" value="UniProtKB"/>
</dbReference>
<dbReference type="GO" id="GO:0071986">
    <property type="term" value="C:Ragulator complex"/>
    <property type="evidence" value="ECO:0000250"/>
    <property type="project" value="UniProtKB"/>
</dbReference>
<dbReference type="GO" id="GO:0051020">
    <property type="term" value="F:GTPase binding"/>
    <property type="evidence" value="ECO:0000266"/>
    <property type="project" value="RGD"/>
</dbReference>
<dbReference type="GO" id="GO:0043495">
    <property type="term" value="F:protein-membrane adaptor activity"/>
    <property type="evidence" value="ECO:0000250"/>
    <property type="project" value="UniProtKB"/>
</dbReference>
<dbReference type="GO" id="GO:0071230">
    <property type="term" value="P:cellular response to amino acid stimulus"/>
    <property type="evidence" value="ECO:0000250"/>
    <property type="project" value="UniProtKB"/>
</dbReference>
<dbReference type="GO" id="GO:0031669">
    <property type="term" value="P:cellular response to nutrient levels"/>
    <property type="evidence" value="ECO:0000266"/>
    <property type="project" value="RGD"/>
</dbReference>
<dbReference type="GO" id="GO:0042632">
    <property type="term" value="P:cholesterol homeostasis"/>
    <property type="evidence" value="ECO:0000250"/>
    <property type="project" value="UniProtKB"/>
</dbReference>
<dbReference type="GO" id="GO:0016197">
    <property type="term" value="P:endosomal transport"/>
    <property type="evidence" value="ECO:0000250"/>
    <property type="project" value="UniProtKB"/>
</dbReference>
<dbReference type="GO" id="GO:0007032">
    <property type="term" value="P:endosome organization"/>
    <property type="evidence" value="ECO:0000250"/>
    <property type="project" value="UniProtKB"/>
</dbReference>
<dbReference type="GO" id="GO:0032418">
    <property type="term" value="P:lysosome localization"/>
    <property type="evidence" value="ECO:0000250"/>
    <property type="project" value="UniProtKB"/>
</dbReference>
<dbReference type="GO" id="GO:0007040">
    <property type="term" value="P:lysosome organization"/>
    <property type="evidence" value="ECO:0000250"/>
    <property type="project" value="UniProtKB"/>
</dbReference>
<dbReference type="GO" id="GO:0043410">
    <property type="term" value="P:positive regulation of MAPK cascade"/>
    <property type="evidence" value="ECO:0000250"/>
    <property type="project" value="UniProtKB"/>
</dbReference>
<dbReference type="GO" id="GO:0150032">
    <property type="term" value="P:positive regulation of protein localization to lysosome"/>
    <property type="evidence" value="ECO:0000266"/>
    <property type="project" value="RGD"/>
</dbReference>
<dbReference type="GO" id="GO:0032008">
    <property type="term" value="P:positive regulation of TOR signaling"/>
    <property type="evidence" value="ECO:0000250"/>
    <property type="project" value="UniProtKB"/>
</dbReference>
<dbReference type="GO" id="GO:1904263">
    <property type="term" value="P:positive regulation of TORC1 signaling"/>
    <property type="evidence" value="ECO:0000250"/>
    <property type="project" value="UniProtKB"/>
</dbReference>
<dbReference type="GO" id="GO:0008104">
    <property type="term" value="P:protein localization"/>
    <property type="evidence" value="ECO:0000250"/>
    <property type="project" value="UniProtKB"/>
</dbReference>
<dbReference type="GO" id="GO:0072657">
    <property type="term" value="P:protein localization to membrane"/>
    <property type="evidence" value="ECO:0000250"/>
    <property type="project" value="UniProtKB"/>
</dbReference>
<dbReference type="GO" id="GO:0001558">
    <property type="term" value="P:regulation of cell growth"/>
    <property type="evidence" value="ECO:0000250"/>
    <property type="project" value="UniProtKB"/>
</dbReference>
<dbReference type="GO" id="GO:0010874">
    <property type="term" value="P:regulation of cholesterol efflux"/>
    <property type="evidence" value="ECO:0000250"/>
    <property type="project" value="UniProtKB"/>
</dbReference>
<dbReference type="GO" id="GO:0060620">
    <property type="term" value="P:regulation of cholesterol import"/>
    <property type="evidence" value="ECO:0000250"/>
    <property type="project" value="UniProtKB"/>
</dbReference>
<dbReference type="GO" id="GO:0001919">
    <property type="term" value="P:regulation of receptor recycling"/>
    <property type="evidence" value="ECO:0000250"/>
    <property type="project" value="UniProtKB"/>
</dbReference>
<dbReference type="InterPro" id="IPR028209">
    <property type="entry name" value="LAMTOR1/MEH1"/>
</dbReference>
<dbReference type="PANTHER" id="PTHR13401">
    <property type="entry name" value="RAGULATOR COMPLEX PROTEIN LAMTOR1"/>
    <property type="match status" value="1"/>
</dbReference>
<dbReference type="PANTHER" id="PTHR13401:SF2">
    <property type="entry name" value="RAGULATOR COMPLEX PROTEIN LAMTOR1"/>
    <property type="match status" value="1"/>
</dbReference>
<dbReference type="Pfam" id="PF15454">
    <property type="entry name" value="LAMTOR"/>
    <property type="match status" value="1"/>
</dbReference>
<dbReference type="SMART" id="SM01262">
    <property type="entry name" value="LAMTOR"/>
    <property type="match status" value="1"/>
</dbReference>